<dbReference type="EMBL" id="AF015775">
    <property type="protein sequence ID" value="AAB72056.1"/>
    <property type="molecule type" value="Genomic_DNA"/>
</dbReference>
<dbReference type="EMBL" id="AF006665">
    <property type="protein sequence ID" value="AAB81166.1"/>
    <property type="molecule type" value="Genomic_DNA"/>
</dbReference>
<dbReference type="EMBL" id="AL009126">
    <property type="protein sequence ID" value="CAB13852.1"/>
    <property type="molecule type" value="Genomic_DNA"/>
</dbReference>
<dbReference type="PIR" id="E69903">
    <property type="entry name" value="E69903"/>
</dbReference>
<dbReference type="RefSeq" id="NP_389842.1">
    <property type="nucleotide sequence ID" value="NC_000964.3"/>
</dbReference>
<dbReference type="RefSeq" id="WP_003231182.1">
    <property type="nucleotide sequence ID" value="NZ_OZ025638.1"/>
</dbReference>
<dbReference type="SMR" id="O34654"/>
<dbReference type="FunCoup" id="O34654">
    <property type="interactions" value="135"/>
</dbReference>
<dbReference type="STRING" id="224308.BSU19610"/>
<dbReference type="PaxDb" id="224308-BSU19610"/>
<dbReference type="EnsemblBacteria" id="CAB13852">
    <property type="protein sequence ID" value="CAB13852"/>
    <property type="gene ID" value="BSU_19610"/>
</dbReference>
<dbReference type="GeneID" id="940039"/>
<dbReference type="KEGG" id="bsu:BSU19610"/>
<dbReference type="PATRIC" id="fig|224308.179.peg.2144"/>
<dbReference type="eggNOG" id="ENOG50331PB">
    <property type="taxonomic scope" value="Bacteria"/>
</dbReference>
<dbReference type="InParanoid" id="O34654"/>
<dbReference type="OrthoDB" id="2991597at2"/>
<dbReference type="BioCyc" id="BSUB:BSU19610-MONOMER"/>
<dbReference type="Proteomes" id="UP000001570">
    <property type="component" value="Chromosome"/>
</dbReference>
<dbReference type="GO" id="GO:0016020">
    <property type="term" value="C:membrane"/>
    <property type="evidence" value="ECO:0007669"/>
    <property type="project" value="UniProtKB-SubCell"/>
</dbReference>
<accession>O34654</accession>
<feature type="chain" id="PRO_0000049657" description="Uncharacterized protein YodI">
    <location>
        <begin position="1"/>
        <end position="83"/>
    </location>
</feature>
<feature type="transmembrane region" description="Helical" evidence="1">
    <location>
        <begin position="58"/>
        <end position="80"/>
    </location>
</feature>
<comment type="subcellular location">
    <subcellularLocation>
        <location evidence="2">Membrane</location>
        <topology evidence="2">Single-pass membrane protein</topology>
    </subcellularLocation>
</comment>
<sequence>MERYYHLCKNHQGKVVRITERGGRVHVGRITRVTRDRVFIAPVGGGPRGFGYGYWGGYWGYGAAYGISLGLIAGVALAGLFFW</sequence>
<gene>
    <name type="primary">yodI</name>
    <name type="synonym">yolA</name>
    <name type="ordered locus">BSU19610</name>
</gene>
<proteinExistence type="predicted"/>
<organism>
    <name type="scientific">Bacillus subtilis (strain 168)</name>
    <dbReference type="NCBI Taxonomy" id="224308"/>
    <lineage>
        <taxon>Bacteria</taxon>
        <taxon>Bacillati</taxon>
        <taxon>Bacillota</taxon>
        <taxon>Bacilli</taxon>
        <taxon>Bacillales</taxon>
        <taxon>Bacillaceae</taxon>
        <taxon>Bacillus</taxon>
    </lineage>
</organism>
<protein>
    <recommendedName>
        <fullName>Uncharacterized protein YodI</fullName>
    </recommendedName>
</protein>
<evidence type="ECO:0000255" key="1"/>
<evidence type="ECO:0000305" key="2"/>
<name>YODI_BACSU</name>
<reference key="1">
    <citation type="journal article" date="1998" name="DNA Res.">
        <title>Sequence analysis of the Bacillus subtilis 168 chromosome region between the sspC and odhA loci (184 degrees-180 degrees).</title>
        <authorList>
            <person name="Ghim S.-Y."/>
            <person name="Choi S.-K."/>
            <person name="Shin B.-S."/>
            <person name="Jeong Y.-M."/>
            <person name="Sorokin A."/>
            <person name="Ehrlich S.D."/>
            <person name="Park S.-H."/>
        </authorList>
    </citation>
    <scope>NUCLEOTIDE SEQUENCE [GENOMIC DNA]</scope>
    <source>
        <strain>168</strain>
    </source>
</reference>
<reference key="2">
    <citation type="journal article" date="1997" name="Nature">
        <title>The complete genome sequence of the Gram-positive bacterium Bacillus subtilis.</title>
        <authorList>
            <person name="Kunst F."/>
            <person name="Ogasawara N."/>
            <person name="Moszer I."/>
            <person name="Albertini A.M."/>
            <person name="Alloni G."/>
            <person name="Azevedo V."/>
            <person name="Bertero M.G."/>
            <person name="Bessieres P."/>
            <person name="Bolotin A."/>
            <person name="Borchert S."/>
            <person name="Borriss R."/>
            <person name="Boursier L."/>
            <person name="Brans A."/>
            <person name="Braun M."/>
            <person name="Brignell S.C."/>
            <person name="Bron S."/>
            <person name="Brouillet S."/>
            <person name="Bruschi C.V."/>
            <person name="Caldwell B."/>
            <person name="Capuano V."/>
            <person name="Carter N.M."/>
            <person name="Choi S.-K."/>
            <person name="Codani J.-J."/>
            <person name="Connerton I.F."/>
            <person name="Cummings N.J."/>
            <person name="Daniel R.A."/>
            <person name="Denizot F."/>
            <person name="Devine K.M."/>
            <person name="Duesterhoeft A."/>
            <person name="Ehrlich S.D."/>
            <person name="Emmerson P.T."/>
            <person name="Entian K.-D."/>
            <person name="Errington J."/>
            <person name="Fabret C."/>
            <person name="Ferrari E."/>
            <person name="Foulger D."/>
            <person name="Fritz C."/>
            <person name="Fujita M."/>
            <person name="Fujita Y."/>
            <person name="Fuma S."/>
            <person name="Galizzi A."/>
            <person name="Galleron N."/>
            <person name="Ghim S.-Y."/>
            <person name="Glaser P."/>
            <person name="Goffeau A."/>
            <person name="Golightly E.J."/>
            <person name="Grandi G."/>
            <person name="Guiseppi G."/>
            <person name="Guy B.J."/>
            <person name="Haga K."/>
            <person name="Haiech J."/>
            <person name="Harwood C.R."/>
            <person name="Henaut A."/>
            <person name="Hilbert H."/>
            <person name="Holsappel S."/>
            <person name="Hosono S."/>
            <person name="Hullo M.-F."/>
            <person name="Itaya M."/>
            <person name="Jones L.-M."/>
            <person name="Joris B."/>
            <person name="Karamata D."/>
            <person name="Kasahara Y."/>
            <person name="Klaerr-Blanchard M."/>
            <person name="Klein C."/>
            <person name="Kobayashi Y."/>
            <person name="Koetter P."/>
            <person name="Koningstein G."/>
            <person name="Krogh S."/>
            <person name="Kumano M."/>
            <person name="Kurita K."/>
            <person name="Lapidus A."/>
            <person name="Lardinois S."/>
            <person name="Lauber J."/>
            <person name="Lazarevic V."/>
            <person name="Lee S.-M."/>
            <person name="Levine A."/>
            <person name="Liu H."/>
            <person name="Masuda S."/>
            <person name="Mauel C."/>
            <person name="Medigue C."/>
            <person name="Medina N."/>
            <person name="Mellado R.P."/>
            <person name="Mizuno M."/>
            <person name="Moestl D."/>
            <person name="Nakai S."/>
            <person name="Noback M."/>
            <person name="Noone D."/>
            <person name="O'Reilly M."/>
            <person name="Ogawa K."/>
            <person name="Ogiwara A."/>
            <person name="Oudega B."/>
            <person name="Park S.-H."/>
            <person name="Parro V."/>
            <person name="Pohl T.M."/>
            <person name="Portetelle D."/>
            <person name="Porwollik S."/>
            <person name="Prescott A.M."/>
            <person name="Presecan E."/>
            <person name="Pujic P."/>
            <person name="Purnelle B."/>
            <person name="Rapoport G."/>
            <person name="Rey M."/>
            <person name="Reynolds S."/>
            <person name="Rieger M."/>
            <person name="Rivolta C."/>
            <person name="Rocha E."/>
            <person name="Roche B."/>
            <person name="Rose M."/>
            <person name="Sadaie Y."/>
            <person name="Sato T."/>
            <person name="Scanlan E."/>
            <person name="Schleich S."/>
            <person name="Schroeter R."/>
            <person name="Scoffone F."/>
            <person name="Sekiguchi J."/>
            <person name="Sekowska A."/>
            <person name="Seror S.J."/>
            <person name="Serror P."/>
            <person name="Shin B.-S."/>
            <person name="Soldo B."/>
            <person name="Sorokin A."/>
            <person name="Tacconi E."/>
            <person name="Takagi T."/>
            <person name="Takahashi H."/>
            <person name="Takemaru K."/>
            <person name="Takeuchi M."/>
            <person name="Tamakoshi A."/>
            <person name="Tanaka T."/>
            <person name="Terpstra P."/>
            <person name="Tognoni A."/>
            <person name="Tosato V."/>
            <person name="Uchiyama S."/>
            <person name="Vandenbol M."/>
            <person name="Vannier F."/>
            <person name="Vassarotti A."/>
            <person name="Viari A."/>
            <person name="Wambutt R."/>
            <person name="Wedler E."/>
            <person name="Wedler H."/>
            <person name="Weitzenegger T."/>
            <person name="Winters P."/>
            <person name="Wipat A."/>
            <person name="Yamamoto H."/>
            <person name="Yamane K."/>
            <person name="Yasumoto K."/>
            <person name="Yata K."/>
            <person name="Yoshida K."/>
            <person name="Yoshikawa H.-F."/>
            <person name="Zumstein E."/>
            <person name="Yoshikawa H."/>
            <person name="Danchin A."/>
        </authorList>
    </citation>
    <scope>NUCLEOTIDE SEQUENCE [LARGE SCALE GENOMIC DNA]</scope>
    <source>
        <strain>168</strain>
    </source>
</reference>
<keyword id="KW-0472">Membrane</keyword>
<keyword id="KW-1185">Reference proteome</keyword>
<keyword id="KW-0812">Transmembrane</keyword>
<keyword id="KW-1133">Transmembrane helix</keyword>